<organism>
    <name type="scientific">Mycobacteroides abscessus (strain ATCC 19977 / DSM 44196 / CCUG 20993 / CIP 104536 / JCM 13569 / NCTC 13031 / TMC 1543 / L948)</name>
    <name type="common">Mycobacterium abscessus</name>
    <dbReference type="NCBI Taxonomy" id="561007"/>
    <lineage>
        <taxon>Bacteria</taxon>
        <taxon>Bacillati</taxon>
        <taxon>Actinomycetota</taxon>
        <taxon>Actinomycetes</taxon>
        <taxon>Mycobacteriales</taxon>
        <taxon>Mycobacteriaceae</taxon>
        <taxon>Mycobacteroides</taxon>
        <taxon>Mycobacteroides abscessus</taxon>
    </lineage>
</organism>
<proteinExistence type="inferred from homology"/>
<comment type="function">
    <text evidence="1">Protein S19 forms a complex with S13 that binds strongly to the 16S ribosomal RNA.</text>
</comment>
<comment type="similarity">
    <text evidence="1">Belongs to the universal ribosomal protein uS19 family.</text>
</comment>
<keyword id="KW-1185">Reference proteome</keyword>
<keyword id="KW-0687">Ribonucleoprotein</keyword>
<keyword id="KW-0689">Ribosomal protein</keyword>
<keyword id="KW-0694">RNA-binding</keyword>
<keyword id="KW-0699">rRNA-binding</keyword>
<name>RS19_MYCA9</name>
<sequence length="93" mass="10804">MPRSLKKGPFIDDHLLKKVDVQNEKNTKQVIKTWSRRSTIIPDFIGHTFAVHDGRKHVPVFVTESMVGHKLGEFAPTRTFKGHIKDDRKSKRR</sequence>
<reference key="1">
    <citation type="journal article" date="2009" name="PLoS ONE">
        <title>Non mycobacterial virulence genes in the genome of the emerging pathogen Mycobacterium abscessus.</title>
        <authorList>
            <person name="Ripoll F."/>
            <person name="Pasek S."/>
            <person name="Schenowitz C."/>
            <person name="Dossat C."/>
            <person name="Barbe V."/>
            <person name="Rottman M."/>
            <person name="Macheras E."/>
            <person name="Heym B."/>
            <person name="Herrmann J.L."/>
            <person name="Daffe M."/>
            <person name="Brosch R."/>
            <person name="Risler J.L."/>
            <person name="Gaillard J.L."/>
        </authorList>
    </citation>
    <scope>NUCLEOTIDE SEQUENCE [LARGE SCALE GENOMIC DNA]</scope>
    <source>
        <strain>ATCC 19977 / DSM 44196 / CCUG 20993 / CIP 104536 / JCM 13569 / NCTC 13031 / TMC 1543 / L948</strain>
    </source>
</reference>
<feature type="chain" id="PRO_1000128006" description="Small ribosomal subunit protein uS19">
    <location>
        <begin position="1"/>
        <end position="93"/>
    </location>
</feature>
<gene>
    <name evidence="1" type="primary">rpsS</name>
    <name type="ordered locus">MAB_3816c</name>
</gene>
<evidence type="ECO:0000255" key="1">
    <source>
        <dbReference type="HAMAP-Rule" id="MF_00531"/>
    </source>
</evidence>
<evidence type="ECO:0000305" key="2"/>
<accession>B1MGE6</accession>
<dbReference type="EMBL" id="CU458896">
    <property type="protein sequence ID" value="CAM63891.1"/>
    <property type="molecule type" value="Genomic_DNA"/>
</dbReference>
<dbReference type="RefSeq" id="WP_005055647.1">
    <property type="nucleotide sequence ID" value="NZ_MLCG01000001.1"/>
</dbReference>
<dbReference type="SMR" id="B1MGE6"/>
<dbReference type="GeneID" id="93380755"/>
<dbReference type="KEGG" id="mab:MAB_3816c"/>
<dbReference type="Proteomes" id="UP000007137">
    <property type="component" value="Chromosome"/>
</dbReference>
<dbReference type="GO" id="GO:0005737">
    <property type="term" value="C:cytoplasm"/>
    <property type="evidence" value="ECO:0007669"/>
    <property type="project" value="UniProtKB-ARBA"/>
</dbReference>
<dbReference type="GO" id="GO:0015935">
    <property type="term" value="C:small ribosomal subunit"/>
    <property type="evidence" value="ECO:0007669"/>
    <property type="project" value="InterPro"/>
</dbReference>
<dbReference type="GO" id="GO:0019843">
    <property type="term" value="F:rRNA binding"/>
    <property type="evidence" value="ECO:0007669"/>
    <property type="project" value="UniProtKB-UniRule"/>
</dbReference>
<dbReference type="GO" id="GO:0003735">
    <property type="term" value="F:structural constituent of ribosome"/>
    <property type="evidence" value="ECO:0007669"/>
    <property type="project" value="InterPro"/>
</dbReference>
<dbReference type="GO" id="GO:0000028">
    <property type="term" value="P:ribosomal small subunit assembly"/>
    <property type="evidence" value="ECO:0007669"/>
    <property type="project" value="TreeGrafter"/>
</dbReference>
<dbReference type="GO" id="GO:0006412">
    <property type="term" value="P:translation"/>
    <property type="evidence" value="ECO:0007669"/>
    <property type="project" value="UniProtKB-UniRule"/>
</dbReference>
<dbReference type="FunFam" id="3.30.860.10:FF:000001">
    <property type="entry name" value="30S ribosomal protein S19"/>
    <property type="match status" value="1"/>
</dbReference>
<dbReference type="Gene3D" id="3.30.860.10">
    <property type="entry name" value="30s Ribosomal Protein S19, Chain A"/>
    <property type="match status" value="1"/>
</dbReference>
<dbReference type="HAMAP" id="MF_00531">
    <property type="entry name" value="Ribosomal_uS19"/>
    <property type="match status" value="1"/>
</dbReference>
<dbReference type="InterPro" id="IPR002222">
    <property type="entry name" value="Ribosomal_uS19"/>
</dbReference>
<dbReference type="InterPro" id="IPR005732">
    <property type="entry name" value="Ribosomal_uS19_bac-type"/>
</dbReference>
<dbReference type="InterPro" id="IPR020934">
    <property type="entry name" value="Ribosomal_uS19_CS"/>
</dbReference>
<dbReference type="InterPro" id="IPR023575">
    <property type="entry name" value="Ribosomal_uS19_SF"/>
</dbReference>
<dbReference type="NCBIfam" id="TIGR01050">
    <property type="entry name" value="rpsS_bact"/>
    <property type="match status" value="1"/>
</dbReference>
<dbReference type="PANTHER" id="PTHR11880">
    <property type="entry name" value="RIBOSOMAL PROTEIN S19P FAMILY MEMBER"/>
    <property type="match status" value="1"/>
</dbReference>
<dbReference type="PANTHER" id="PTHR11880:SF8">
    <property type="entry name" value="SMALL RIBOSOMAL SUBUNIT PROTEIN US19M"/>
    <property type="match status" value="1"/>
</dbReference>
<dbReference type="Pfam" id="PF00203">
    <property type="entry name" value="Ribosomal_S19"/>
    <property type="match status" value="1"/>
</dbReference>
<dbReference type="PIRSF" id="PIRSF002144">
    <property type="entry name" value="Ribosomal_S19"/>
    <property type="match status" value="1"/>
</dbReference>
<dbReference type="PRINTS" id="PR00975">
    <property type="entry name" value="RIBOSOMALS19"/>
</dbReference>
<dbReference type="SUPFAM" id="SSF54570">
    <property type="entry name" value="Ribosomal protein S19"/>
    <property type="match status" value="1"/>
</dbReference>
<dbReference type="PROSITE" id="PS00323">
    <property type="entry name" value="RIBOSOMAL_S19"/>
    <property type="match status" value="1"/>
</dbReference>
<protein>
    <recommendedName>
        <fullName evidence="1">Small ribosomal subunit protein uS19</fullName>
    </recommendedName>
    <alternativeName>
        <fullName evidence="2">30S ribosomal protein S19</fullName>
    </alternativeName>
</protein>